<protein>
    <recommendedName>
        <fullName>3-hydroxy-3-methylglutaryl-coenzyme A reductase</fullName>
        <shortName>HMG-CoA reductase</shortName>
        <ecNumber evidence="7">1.1.1.34</ecNumber>
    </recommendedName>
</protein>
<gene>
    <name type="primary">Hmgcr</name>
</gene>
<name>HMDH_MOUSE</name>
<comment type="function">
    <text evidence="7">Catalyzes the conversion of (3S)-hydroxy-3-methylglutaryl-CoA (HMG-CoA) to mevalonic acid, the rate-limiting step in the synthesis of cholesterol and other isoprenoids, thus plays a critical role in cellular cholesterol homeostasis.</text>
</comment>
<comment type="catalytic activity">
    <reaction evidence="7">
        <text>(R)-mevalonate + 2 NADP(+) + CoA = (3S)-3-hydroxy-3-methylglutaryl-CoA + 2 NADPH + 2 H(+)</text>
        <dbReference type="Rhea" id="RHEA:15989"/>
        <dbReference type="ChEBI" id="CHEBI:15378"/>
        <dbReference type="ChEBI" id="CHEBI:36464"/>
        <dbReference type="ChEBI" id="CHEBI:43074"/>
        <dbReference type="ChEBI" id="CHEBI:57287"/>
        <dbReference type="ChEBI" id="CHEBI:57783"/>
        <dbReference type="ChEBI" id="CHEBI:58349"/>
        <dbReference type="EC" id="1.1.1.34"/>
    </reaction>
    <physiologicalReaction direction="right-to-left" evidence="9">
        <dbReference type="Rhea" id="RHEA:15991"/>
    </physiologicalReaction>
</comment>
<comment type="activity regulation">
    <text evidence="1 2">Regulated by a negative feedback mechanism through sterols and non-sterol metabolites derived from mevalonate (By similarity). Phosphorylation at Ser-871 down-regulates the catalytic activity (By similarity).</text>
</comment>
<comment type="pathway">
    <text>Metabolic intermediate biosynthesis; (R)-mevalonate biosynthesis; (R)-mevalonate from acetyl-CoA: step 3/3.</text>
</comment>
<comment type="subunit">
    <text evidence="2">Homotetramer. Homodimer. Interacts (via its SSD) with INSIG1; the interaction, accelerated by sterols, leads to the recruitment of HMGCR to AMFR/gp78 for its ubiquitination by the sterol-mediated ERAD pathway. Interacts with UBIAD1.</text>
</comment>
<comment type="subcellular location">
    <subcellularLocation>
        <location evidence="2">Endoplasmic reticulum membrane</location>
        <topology evidence="1">Multi-pass membrane protein</topology>
    </subcellularLocation>
    <subcellularLocation>
        <location evidence="2">Peroxisome membrane</location>
        <topology evidence="1">Multi-pass membrane protein</topology>
    </subcellularLocation>
</comment>
<comment type="PTM">
    <text evidence="2">Undergoes sterol-mediated ubiquitination and ER-associated degradation (ERAD). Accumulation of sterols in the endoplasmic reticulum (ER) membrane, triggers binding of the reductase to the ER membrane protein INSIG1 or INSIG2. The INSIG1 binding leads to the recruitment of the ubiquitin ligase, AMFR/gp78, RNF139 or RNF145, initiating ubiquitination of the reductase. The ubiquitinated reductase is then extracted from the ER membrane and delivered to cytosolic 26S proteosomes by a mechanism probably mediated by the ATPase Valosin-containing protein VCP/p97. The INSIG2-binding leads to the recruitment of the ubiquitin ligase RNF139, initiating ubiquitination of the reductase. Lys-248 is the main site of ubiquitination. Ubiquitination is enhanced by the presence of a geranylgeranylated protein.</text>
</comment>
<comment type="PTM">
    <text evidence="2">N-glycosylated. Deglycosylated by NGLY1 on release from the endoplasmic reticulum (ER) in a sterol-mediated manner.</text>
</comment>
<comment type="PTM">
    <text evidence="1">Phosphorylated. Phosphorylation at Ser-871 reduces the catalytic activity.</text>
</comment>
<comment type="disruption phenotype">
    <text evidence="6">Homozygous knockout mice show early embryonic lethality.</text>
</comment>
<comment type="similarity">
    <text evidence="8">Belongs to the HMG-CoA reductase family.</text>
</comment>
<evidence type="ECO:0000250" key="1">
    <source>
        <dbReference type="UniProtKB" id="P00347"/>
    </source>
</evidence>
<evidence type="ECO:0000250" key="2">
    <source>
        <dbReference type="UniProtKB" id="P04035"/>
    </source>
</evidence>
<evidence type="ECO:0000255" key="3"/>
<evidence type="ECO:0000255" key="4">
    <source>
        <dbReference type="PROSITE-ProRule" id="PRU00199"/>
    </source>
</evidence>
<evidence type="ECO:0000255" key="5">
    <source>
        <dbReference type="PROSITE-ProRule" id="PRU10003"/>
    </source>
</evidence>
<evidence type="ECO:0000269" key="6">
    <source>
    </source>
</evidence>
<evidence type="ECO:0000269" key="7">
    <source>
    </source>
</evidence>
<evidence type="ECO:0000305" key="8"/>
<evidence type="ECO:0000305" key="9">
    <source>
    </source>
</evidence>
<evidence type="ECO:0007744" key="10">
    <source>
    </source>
</evidence>
<keyword id="KW-0152">Cholesterol biosynthesis</keyword>
<keyword id="KW-0153">Cholesterol metabolism</keyword>
<keyword id="KW-0256">Endoplasmic reticulum</keyword>
<keyword id="KW-0325">Glycoprotein</keyword>
<keyword id="KW-1017">Isopeptide bond</keyword>
<keyword id="KW-0444">Lipid biosynthesis</keyword>
<keyword id="KW-0443">Lipid metabolism</keyword>
<keyword id="KW-0472">Membrane</keyword>
<keyword id="KW-0521">NADP</keyword>
<keyword id="KW-0560">Oxidoreductase</keyword>
<keyword id="KW-0576">Peroxisome</keyword>
<keyword id="KW-0597">Phosphoprotein</keyword>
<keyword id="KW-1185">Reference proteome</keyword>
<keyword id="KW-0752">Steroid biosynthesis</keyword>
<keyword id="KW-0753">Steroid metabolism</keyword>
<keyword id="KW-0756">Sterol biosynthesis</keyword>
<keyword id="KW-1207">Sterol metabolism</keyword>
<keyword id="KW-0812">Transmembrane</keyword>
<keyword id="KW-1133">Transmembrane helix</keyword>
<keyword id="KW-0832">Ubl conjugation</keyword>
<proteinExistence type="evidence at protein level"/>
<organism>
    <name type="scientific">Mus musculus</name>
    <name type="common">Mouse</name>
    <dbReference type="NCBI Taxonomy" id="10090"/>
    <lineage>
        <taxon>Eukaryota</taxon>
        <taxon>Metazoa</taxon>
        <taxon>Chordata</taxon>
        <taxon>Craniata</taxon>
        <taxon>Vertebrata</taxon>
        <taxon>Euteleostomi</taxon>
        <taxon>Mammalia</taxon>
        <taxon>Eutheria</taxon>
        <taxon>Euarchontoglires</taxon>
        <taxon>Glires</taxon>
        <taxon>Rodentia</taxon>
        <taxon>Myomorpha</taxon>
        <taxon>Muroidea</taxon>
        <taxon>Muridae</taxon>
        <taxon>Murinae</taxon>
        <taxon>Mus</taxon>
        <taxon>Mus</taxon>
    </lineage>
</organism>
<feature type="chain" id="PRO_0000114421" description="3-hydroxy-3-methylglutaryl-coenzyme A reductase">
    <location>
        <begin position="1"/>
        <end position="887"/>
    </location>
</feature>
<feature type="topological domain" description="Cytoplasmic" evidence="1">
    <location>
        <begin position="1"/>
        <end position="9"/>
    </location>
</feature>
<feature type="transmembrane region" description="Helical" evidence="1">
    <location>
        <begin position="10"/>
        <end position="39"/>
    </location>
</feature>
<feature type="topological domain" description="Lumenal" evidence="1">
    <location>
        <begin position="40"/>
        <end position="56"/>
    </location>
</feature>
<feature type="transmembrane region" description="Helical" evidence="1">
    <location>
        <begin position="57"/>
        <end position="78"/>
    </location>
</feature>
<feature type="topological domain" description="Cytoplasmic" evidence="1">
    <location>
        <begin position="79"/>
        <end position="89"/>
    </location>
</feature>
<feature type="transmembrane region" description="Helical" evidence="1">
    <location>
        <begin position="90"/>
        <end position="114"/>
    </location>
</feature>
<feature type="topological domain" description="Lumenal" evidence="1">
    <location>
        <begin position="115"/>
        <end position="123"/>
    </location>
</feature>
<feature type="transmembrane region" description="Helical" evidence="1">
    <location>
        <begin position="124"/>
        <end position="149"/>
    </location>
</feature>
<feature type="topological domain" description="Cytoplasmic" evidence="1">
    <location>
        <begin position="150"/>
        <end position="159"/>
    </location>
</feature>
<feature type="transmembrane region" description="Helical" evidence="1">
    <location>
        <begin position="160"/>
        <end position="187"/>
    </location>
</feature>
<feature type="topological domain" description="Lumenal" evidence="1">
    <location>
        <begin position="188"/>
        <end position="191"/>
    </location>
</feature>
<feature type="transmembrane region" description="Helical" evidence="1">
    <location>
        <begin position="192"/>
        <end position="220"/>
    </location>
</feature>
<feature type="topological domain" description="Cytoplasmic" evidence="1">
    <location>
        <begin position="221"/>
        <end position="248"/>
    </location>
</feature>
<feature type="transmembrane region" description="Helical" evidence="1">
    <location>
        <begin position="249"/>
        <end position="275"/>
    </location>
</feature>
<feature type="topological domain" description="Lumenal" evidence="1">
    <location>
        <begin position="276"/>
        <end position="314"/>
    </location>
</feature>
<feature type="transmembrane region" description="Helical" evidence="1">
    <location>
        <begin position="315"/>
        <end position="339"/>
    </location>
</feature>
<feature type="topological domain" description="Cytoplasmic" evidence="1">
    <location>
        <begin position="340"/>
        <end position="887"/>
    </location>
</feature>
<feature type="domain" description="SSD" evidence="4">
    <location>
        <begin position="61"/>
        <end position="218"/>
    </location>
</feature>
<feature type="short sequence motif" description="INSIG-binding motif" evidence="2">
    <location>
        <begin position="75"/>
        <end position="78"/>
    </location>
</feature>
<feature type="active site" description="Charge relay system" evidence="2">
    <location>
        <position position="558"/>
    </location>
</feature>
<feature type="active site" description="Charge relay system" evidence="2">
    <location>
        <position position="690"/>
    </location>
</feature>
<feature type="active site" description="Charge relay system" evidence="2">
    <location>
        <position position="766"/>
    </location>
</feature>
<feature type="active site" description="Proton donor" evidence="5">
    <location>
        <position position="865"/>
    </location>
</feature>
<feature type="modified residue" description="Phosphoserine" evidence="10">
    <location>
        <position position="871"/>
    </location>
</feature>
<feature type="glycosylation site" description="N-linked (GlcNAc...) asparagine" evidence="3">
    <location>
        <position position="281"/>
    </location>
</feature>
<feature type="cross-link" description="Glycyl lysine isopeptide (Lys-Gly) (interchain with G-Cter in ubiquitin)" evidence="1">
    <location>
        <position position="89"/>
    </location>
</feature>
<feature type="cross-link" description="Glycyl lysine isopeptide (Lys-Gly) (interchain with G-Cter in ubiquitin)" evidence="1">
    <location>
        <position position="248"/>
    </location>
</feature>
<feature type="sequence conflict" description="In Ref. 3; AAH85083." evidence="8" ref="3">
    <original>M</original>
    <variation>I</variation>
    <location>
        <position position="258"/>
    </location>
</feature>
<sequence length="887" mass="97040">MLSRLFRMHGLFVASHPWEVIVGTVTLTICMMSMNMFTGNNKICGWNYECPKFEEDVLSSDIIILTITRCIAILYIYFQFQNLRQLGSKYILGIAGLFTIFSSFVFSTVVIHFLDKELTGLNEALPFFLLLIDLSRASALAKFALSSNSQDEVRENIARGMAILGPTFTLDALVECLVIGVGTMSGVRQLEIMCCFGCMSVLANYFVFMTFFPACVSLVLELSRESREGRPIWQLSHFARVLEEEENKPNPVTQRVKMIMSLGLVLVHAHSRWIADPSPQNSTAEQAKVSLGLDEDVSKRIEPSVSLWQFYLSKMISMDIEQVITLSLAFLLAVKYIFFEQAETESTLSLKNPITSPVVTSKKAQDNCCRREPLLVRRNQKLSSVEEDPGANQERKVEVIKPLVVEAETTSRATFVLGASVASPPSALGTQEPGIELPIEPRPNEECLQILENAEKGAKFLSDAEIIQLVNAKHIPAYKLETLMETHERGVSIRRQLLSTKLAEPSSLQYLPYRDYNYSLVMGACCENVIGYMPIPVGVAGPLCLDGKEYQVPMATTEGCLVASTNRGCRAISLGGGASSRVLADGMTRGPVVRLPRACDSAEVKTWLETPEGFAVIKEAFDSTSRFARLQKLHVTMAGRNLYIRFQSRTGDAMGMNMISKGTEKALLKLQEFFPDMQILAVSGNYCTDKKPAAINWIEGRGKTVVCEAVIPAKVVREVLKTTTEAMVDVNINKNLVGSAMAGSIGGYNAHAANIVTAIYIACGQDAAQNVGSSNCITLMEASGPTNEDLYISCTMPSIEIGTVGGGTNLLPQQACLQMLGVQGACKDNPGENARQLARIVCGTVMAGELSLMAALAAGHLVRSHMVHNRSKINLQDLQGTCTKKAA</sequence>
<dbReference type="EC" id="1.1.1.34" evidence="7"/>
<dbReference type="EMBL" id="AC154851">
    <property type="status" value="NOT_ANNOTATED_CDS"/>
    <property type="molecule type" value="Genomic_DNA"/>
</dbReference>
<dbReference type="EMBL" id="CH466567">
    <property type="protein sequence ID" value="EDL00884.1"/>
    <property type="molecule type" value="Genomic_DNA"/>
</dbReference>
<dbReference type="EMBL" id="BC085083">
    <property type="protein sequence ID" value="AAH85083.1"/>
    <property type="molecule type" value="mRNA"/>
</dbReference>
<dbReference type="EMBL" id="M62766">
    <property type="protein sequence ID" value="AAA37819.1"/>
    <property type="molecule type" value="mRNA"/>
</dbReference>
<dbReference type="CCDS" id="CCDS26706.1"/>
<dbReference type="PIR" id="A43533">
    <property type="entry name" value="A43533"/>
</dbReference>
<dbReference type="RefSeq" id="NP_001347094.1">
    <property type="nucleotide sequence ID" value="NM_001360165.1"/>
</dbReference>
<dbReference type="RefSeq" id="NP_032281.2">
    <property type="nucleotide sequence ID" value="NM_008255.2"/>
</dbReference>
<dbReference type="RefSeq" id="XP_006517594.1">
    <property type="nucleotide sequence ID" value="XM_006517531.1"/>
</dbReference>
<dbReference type="RefSeq" id="XP_036013747.1">
    <property type="nucleotide sequence ID" value="XM_036157854.1"/>
</dbReference>
<dbReference type="SMR" id="Q01237"/>
<dbReference type="BioGRID" id="200338">
    <property type="interactions" value="3"/>
</dbReference>
<dbReference type="FunCoup" id="Q01237">
    <property type="interactions" value="2222"/>
</dbReference>
<dbReference type="STRING" id="10090.ENSMUSP00000022176"/>
<dbReference type="BindingDB" id="Q01237"/>
<dbReference type="ChEMBL" id="CHEMBL2764"/>
<dbReference type="DrugCentral" id="Q01237"/>
<dbReference type="GuidetoPHARMACOLOGY" id="639"/>
<dbReference type="GlyCosmos" id="Q01237">
    <property type="glycosylation" value="1 site, No reported glycans"/>
</dbReference>
<dbReference type="GlyGen" id="Q01237">
    <property type="glycosylation" value="1 site, 1 N-linked glycan (1 site)"/>
</dbReference>
<dbReference type="iPTMnet" id="Q01237"/>
<dbReference type="PhosphoSitePlus" id="Q01237"/>
<dbReference type="jPOST" id="Q01237"/>
<dbReference type="PaxDb" id="10090-ENSMUSP00000022176"/>
<dbReference type="PeptideAtlas" id="Q01237"/>
<dbReference type="ProteomicsDB" id="267050"/>
<dbReference type="Pumba" id="Q01237"/>
<dbReference type="Antibodypedia" id="24380">
    <property type="antibodies" value="331 antibodies from 35 providers"/>
</dbReference>
<dbReference type="DNASU" id="15357"/>
<dbReference type="Ensembl" id="ENSMUST00000022176.15">
    <property type="protein sequence ID" value="ENSMUSP00000022176.9"/>
    <property type="gene ID" value="ENSMUSG00000021670.15"/>
</dbReference>
<dbReference type="GeneID" id="15357"/>
<dbReference type="KEGG" id="mmu:15357"/>
<dbReference type="UCSC" id="uc007rnm.3">
    <property type="organism name" value="mouse"/>
</dbReference>
<dbReference type="AGR" id="MGI:96159"/>
<dbReference type="CTD" id="3156"/>
<dbReference type="MGI" id="MGI:96159">
    <property type="gene designation" value="Hmgcr"/>
</dbReference>
<dbReference type="VEuPathDB" id="HostDB:ENSMUSG00000021670"/>
<dbReference type="eggNOG" id="KOG2480">
    <property type="taxonomic scope" value="Eukaryota"/>
</dbReference>
<dbReference type="GeneTree" id="ENSGT00940000155305"/>
<dbReference type="HOGENOM" id="CLU_001734_0_1_1"/>
<dbReference type="InParanoid" id="Q01237"/>
<dbReference type="OMA" id="DCHIAMD"/>
<dbReference type="OrthoDB" id="310654at2759"/>
<dbReference type="PhylomeDB" id="Q01237"/>
<dbReference type="TreeFam" id="TF105362"/>
<dbReference type="BRENDA" id="1.1.1.34">
    <property type="organism ID" value="3474"/>
</dbReference>
<dbReference type="Reactome" id="R-MMU-191273">
    <property type="pathway name" value="Cholesterol biosynthesis"/>
</dbReference>
<dbReference type="SABIO-RK" id="Q01237"/>
<dbReference type="UniPathway" id="UPA00058">
    <property type="reaction ID" value="UER00103"/>
</dbReference>
<dbReference type="BioGRID-ORCS" id="15357">
    <property type="hits" value="17 hits in 83 CRISPR screens"/>
</dbReference>
<dbReference type="ChiTaRS" id="Hmgcr">
    <property type="organism name" value="mouse"/>
</dbReference>
<dbReference type="PRO" id="PR:Q01237"/>
<dbReference type="Proteomes" id="UP000000589">
    <property type="component" value="Chromosome 13"/>
</dbReference>
<dbReference type="RNAct" id="Q01237">
    <property type="molecule type" value="protein"/>
</dbReference>
<dbReference type="Bgee" id="ENSMUSG00000021670">
    <property type="expression patterns" value="Expressed in spermatocyte and 266 other cell types or tissues"/>
</dbReference>
<dbReference type="ExpressionAtlas" id="Q01237">
    <property type="expression patterns" value="baseline and differential"/>
</dbReference>
<dbReference type="GO" id="GO:0005783">
    <property type="term" value="C:endoplasmic reticulum"/>
    <property type="evidence" value="ECO:0000250"/>
    <property type="project" value="UniProtKB"/>
</dbReference>
<dbReference type="GO" id="GO:0005789">
    <property type="term" value="C:endoplasmic reticulum membrane"/>
    <property type="evidence" value="ECO:0007669"/>
    <property type="project" value="UniProtKB-SubCell"/>
</dbReference>
<dbReference type="GO" id="GO:0005778">
    <property type="term" value="C:peroxisomal membrane"/>
    <property type="evidence" value="ECO:0000250"/>
    <property type="project" value="UniProtKB"/>
</dbReference>
<dbReference type="GO" id="GO:0120225">
    <property type="term" value="F:coenzyme A binding"/>
    <property type="evidence" value="ECO:0007669"/>
    <property type="project" value="Ensembl"/>
</dbReference>
<dbReference type="GO" id="GO:0030695">
    <property type="term" value="F:GTPase regulator activity"/>
    <property type="evidence" value="ECO:0000316"/>
    <property type="project" value="MGI"/>
</dbReference>
<dbReference type="GO" id="GO:0004420">
    <property type="term" value="F:hydroxymethylglutaryl-CoA reductase (NADPH) activity"/>
    <property type="evidence" value="ECO:0000314"/>
    <property type="project" value="MGI"/>
</dbReference>
<dbReference type="GO" id="GO:0070402">
    <property type="term" value="F:NADPH binding"/>
    <property type="evidence" value="ECO:0007669"/>
    <property type="project" value="Ensembl"/>
</dbReference>
<dbReference type="GO" id="GO:0006695">
    <property type="term" value="P:cholesterol biosynthetic process"/>
    <property type="evidence" value="ECO:0000314"/>
    <property type="project" value="MGI"/>
</dbReference>
<dbReference type="GO" id="GO:0015936">
    <property type="term" value="P:coenzyme A metabolic process"/>
    <property type="evidence" value="ECO:0007669"/>
    <property type="project" value="InterPro"/>
</dbReference>
<dbReference type="GO" id="GO:0008299">
    <property type="term" value="P:isoprenoid biosynthetic process"/>
    <property type="evidence" value="ECO:0007669"/>
    <property type="project" value="InterPro"/>
</dbReference>
<dbReference type="GO" id="GO:0060291">
    <property type="term" value="P:long-term synaptic potentiation"/>
    <property type="evidence" value="ECO:0000316"/>
    <property type="project" value="MGI"/>
</dbReference>
<dbReference type="GO" id="GO:1900222">
    <property type="term" value="P:negative regulation of amyloid-beta clearance"/>
    <property type="evidence" value="ECO:0000315"/>
    <property type="project" value="ARUK-UCL"/>
</dbReference>
<dbReference type="GO" id="GO:0042177">
    <property type="term" value="P:negative regulation of protein catabolic process"/>
    <property type="evidence" value="ECO:0000315"/>
    <property type="project" value="ARUK-UCL"/>
</dbReference>
<dbReference type="GO" id="GO:0050709">
    <property type="term" value="P:negative regulation of protein secretion"/>
    <property type="evidence" value="ECO:0000315"/>
    <property type="project" value="ARUK-UCL"/>
</dbReference>
<dbReference type="GO" id="GO:0070372">
    <property type="term" value="P:regulation of ERK1 and ERK2 cascade"/>
    <property type="evidence" value="ECO:0000316"/>
    <property type="project" value="MGI"/>
</dbReference>
<dbReference type="GO" id="GO:0008542">
    <property type="term" value="P:visual learning"/>
    <property type="evidence" value="ECO:0000316"/>
    <property type="project" value="MGI"/>
</dbReference>
<dbReference type="CDD" id="cd00643">
    <property type="entry name" value="HMG-CoA_reductase_classI"/>
    <property type="match status" value="1"/>
</dbReference>
<dbReference type="FunFam" id="1.10.3270.10:FF:000001">
    <property type="entry name" value="3-hydroxy-3-methylglutaryl coenzyme A reductase"/>
    <property type="match status" value="1"/>
</dbReference>
<dbReference type="FunFam" id="3.30.70.420:FF:000001">
    <property type="entry name" value="3-hydroxy-3-methylglutaryl coenzyme A reductase"/>
    <property type="match status" value="1"/>
</dbReference>
<dbReference type="FunFam" id="3.90.770.10:FF:000002">
    <property type="entry name" value="3-hydroxy-3-methylglutaryl coenzyme A reductase"/>
    <property type="match status" value="1"/>
</dbReference>
<dbReference type="Gene3D" id="3.90.770.10">
    <property type="entry name" value="3-hydroxy-3-methylglutaryl-coenzyme A Reductase, Chain A, domain 2"/>
    <property type="match status" value="1"/>
</dbReference>
<dbReference type="Gene3D" id="1.10.3270.10">
    <property type="entry name" value="HMGR, N-terminal domain"/>
    <property type="match status" value="1"/>
</dbReference>
<dbReference type="Gene3D" id="3.30.70.420">
    <property type="entry name" value="Hydroxymethylglutaryl-CoA reductase, class I/II, NAD/NADP-binding domain"/>
    <property type="match status" value="1"/>
</dbReference>
<dbReference type="InterPro" id="IPR002202">
    <property type="entry name" value="HMG_CoA_Rdtase"/>
</dbReference>
<dbReference type="InterPro" id="IPR023074">
    <property type="entry name" value="HMG_CoA_Rdtase_cat_sf"/>
</dbReference>
<dbReference type="InterPro" id="IPR023076">
    <property type="entry name" value="HMG_CoA_Rdtase_CS"/>
</dbReference>
<dbReference type="InterPro" id="IPR004554">
    <property type="entry name" value="HMG_CoA_Rdtase_eu_arc"/>
</dbReference>
<dbReference type="InterPro" id="IPR004816">
    <property type="entry name" value="HMG_CoA_Rdtase_metazoan"/>
</dbReference>
<dbReference type="InterPro" id="IPR023282">
    <property type="entry name" value="HMG_CoA_Rdtase_N"/>
</dbReference>
<dbReference type="InterPro" id="IPR009023">
    <property type="entry name" value="HMG_CoA_Rdtase_NAD(P)-bd_sf"/>
</dbReference>
<dbReference type="InterPro" id="IPR009029">
    <property type="entry name" value="HMG_CoA_Rdtase_sub-bd_dom_sf"/>
</dbReference>
<dbReference type="InterPro" id="IPR053958">
    <property type="entry name" value="HMGCR/SNAP/NPC1-like_SSD"/>
</dbReference>
<dbReference type="InterPro" id="IPR000731">
    <property type="entry name" value="SSD"/>
</dbReference>
<dbReference type="NCBIfam" id="TIGR00920">
    <property type="entry name" value="2A060605"/>
    <property type="match status" value="1"/>
</dbReference>
<dbReference type="NCBIfam" id="TIGR00533">
    <property type="entry name" value="HMG_CoA_R_NADP"/>
    <property type="match status" value="1"/>
</dbReference>
<dbReference type="PANTHER" id="PTHR10572">
    <property type="entry name" value="3-HYDROXY-3-METHYLGLUTARYL-COENZYME A REDUCTASE"/>
    <property type="match status" value="1"/>
</dbReference>
<dbReference type="PANTHER" id="PTHR10572:SF24">
    <property type="entry name" value="3-HYDROXY-3-METHYLGLUTARYL-COENZYME A REDUCTASE"/>
    <property type="match status" value="1"/>
</dbReference>
<dbReference type="Pfam" id="PF00368">
    <property type="entry name" value="HMG-CoA_red"/>
    <property type="match status" value="1"/>
</dbReference>
<dbReference type="Pfam" id="PF12349">
    <property type="entry name" value="Sterol-sensing"/>
    <property type="match status" value="1"/>
</dbReference>
<dbReference type="PRINTS" id="PR00071">
    <property type="entry name" value="HMGCOARDTASE"/>
</dbReference>
<dbReference type="SUPFAM" id="SSF82866">
    <property type="entry name" value="Multidrug efflux transporter AcrB transmembrane domain"/>
    <property type="match status" value="1"/>
</dbReference>
<dbReference type="SUPFAM" id="SSF55035">
    <property type="entry name" value="NAD-binding domain of HMG-CoA reductase"/>
    <property type="match status" value="1"/>
</dbReference>
<dbReference type="SUPFAM" id="SSF56542">
    <property type="entry name" value="Substrate-binding domain of HMG-CoA reductase"/>
    <property type="match status" value="1"/>
</dbReference>
<dbReference type="PROSITE" id="PS00066">
    <property type="entry name" value="HMG_COA_REDUCTASE_1"/>
    <property type="match status" value="1"/>
</dbReference>
<dbReference type="PROSITE" id="PS00318">
    <property type="entry name" value="HMG_COA_REDUCTASE_2"/>
    <property type="match status" value="1"/>
</dbReference>
<dbReference type="PROSITE" id="PS01192">
    <property type="entry name" value="HMG_COA_REDUCTASE_3"/>
    <property type="match status" value="1"/>
</dbReference>
<dbReference type="PROSITE" id="PS50065">
    <property type="entry name" value="HMG_COA_REDUCTASE_4"/>
    <property type="match status" value="1"/>
</dbReference>
<dbReference type="PROSITE" id="PS50156">
    <property type="entry name" value="SSD"/>
    <property type="match status" value="1"/>
</dbReference>
<accession>Q01237</accession>
<accession>G3X8U5</accession>
<accession>Q5U4I2</accession>
<reference key="1">
    <citation type="journal article" date="2009" name="PLoS Biol.">
        <title>Lineage-specific biology revealed by a finished genome assembly of the mouse.</title>
        <authorList>
            <person name="Church D.M."/>
            <person name="Goodstadt L."/>
            <person name="Hillier L.W."/>
            <person name="Zody M.C."/>
            <person name="Goldstein S."/>
            <person name="She X."/>
            <person name="Bult C.J."/>
            <person name="Agarwala R."/>
            <person name="Cherry J.L."/>
            <person name="DiCuccio M."/>
            <person name="Hlavina W."/>
            <person name="Kapustin Y."/>
            <person name="Meric P."/>
            <person name="Maglott D."/>
            <person name="Birtle Z."/>
            <person name="Marques A.C."/>
            <person name="Graves T."/>
            <person name="Zhou S."/>
            <person name="Teague B."/>
            <person name="Potamousis K."/>
            <person name="Churas C."/>
            <person name="Place M."/>
            <person name="Herschleb J."/>
            <person name="Runnheim R."/>
            <person name="Forrest D."/>
            <person name="Amos-Landgraf J."/>
            <person name="Schwartz D.C."/>
            <person name="Cheng Z."/>
            <person name="Lindblad-Toh K."/>
            <person name="Eichler E.E."/>
            <person name="Ponting C.P."/>
        </authorList>
    </citation>
    <scope>NUCLEOTIDE SEQUENCE [LARGE SCALE GENOMIC DNA]</scope>
    <source>
        <strain>C57BL/6J</strain>
    </source>
</reference>
<reference key="2">
    <citation type="submission" date="2005-07" db="EMBL/GenBank/DDBJ databases">
        <authorList>
            <person name="Mural R.J."/>
            <person name="Adams M.D."/>
            <person name="Myers E.W."/>
            <person name="Smith H.O."/>
            <person name="Venter J.C."/>
        </authorList>
    </citation>
    <scope>NUCLEOTIDE SEQUENCE [LARGE SCALE GENOMIC DNA]</scope>
</reference>
<reference key="3">
    <citation type="journal article" date="2004" name="Genome Res.">
        <title>The status, quality, and expansion of the NIH full-length cDNA project: the Mammalian Gene Collection (MGC).</title>
        <authorList>
            <consortium name="The MGC Project Team"/>
        </authorList>
    </citation>
    <scope>NUCLEOTIDE SEQUENCE [LARGE SCALE MRNA]</scope>
    <source>
        <strain>FVB/N</strain>
        <tissue>Mammary tumor</tissue>
    </source>
</reference>
<reference key="4">
    <citation type="journal article" date="1990" name="J. Immunol.">
        <title>Glucocorticoid-regulated gene expression in the immune system. Analysis of glucocorticoid-regulated transcripts from the mouse macrophage-like cell line P388D1.</title>
        <authorList>
            <person name="Helmberg A."/>
            <person name="Faessler R."/>
            <person name="Geley S."/>
            <person name="Joehrer K."/>
            <person name="Kroemer G."/>
            <person name="Boeck G."/>
            <person name="Kofler R."/>
        </authorList>
    </citation>
    <scope>NUCLEOTIDE SEQUENCE [MRNA] OF 664-887</scope>
</reference>
<reference key="5">
    <citation type="journal article" date="2003" name="J. Biol. Chem.">
        <title>Early embryonic lethality caused by targeted disruption of the 3-hydroxy-3-methylglutaryl-CoA reductase gene.</title>
        <authorList>
            <person name="Ohashi K."/>
            <person name="Osuga J."/>
            <person name="Tozawa R."/>
            <person name="Kitamine T."/>
            <person name="Yagyu H."/>
            <person name="Sekiya M."/>
            <person name="Tomita S."/>
            <person name="Okazaki H."/>
            <person name="Tamura Y."/>
            <person name="Yahagi N."/>
            <person name="Iizuka Y."/>
            <person name="Harada K."/>
            <person name="Gotoda T."/>
            <person name="Shimano H."/>
            <person name="Yamada N."/>
            <person name="Ishibashi S."/>
        </authorList>
    </citation>
    <scope>DISRUPTION PHENOTYPE</scope>
</reference>
<reference key="6">
    <citation type="journal article" date="2005" name="J. Clin. Invest.">
        <title>Schoenheimer effect explained--feedback regulation of cholesterol synthesis in mice mediated by Insig proteins.</title>
        <authorList>
            <person name="Engelking L.J."/>
            <person name="Liang G."/>
            <person name="Hammer R.E."/>
            <person name="Takaishi K."/>
            <person name="Kuriyama H."/>
            <person name="Evers B.M."/>
            <person name="Li W.P."/>
            <person name="Horton J.D."/>
            <person name="Goldstein J.L."/>
            <person name="Brown M.S."/>
        </authorList>
    </citation>
    <scope>FUNCTION</scope>
    <scope>CATALYTIC ACTIVITY</scope>
</reference>
<reference key="7">
    <citation type="journal article" date="2010" name="Cell">
        <title>A tissue-specific atlas of mouse protein phosphorylation and expression.</title>
        <authorList>
            <person name="Huttlin E.L."/>
            <person name="Jedrychowski M.P."/>
            <person name="Elias J.E."/>
            <person name="Goswami T."/>
            <person name="Rad R."/>
            <person name="Beausoleil S.A."/>
            <person name="Villen J."/>
            <person name="Haas W."/>
            <person name="Sowa M.E."/>
            <person name="Gygi S.P."/>
        </authorList>
    </citation>
    <scope>PHOSPHORYLATION [LARGE SCALE ANALYSIS] AT SER-871</scope>
    <scope>IDENTIFICATION BY MASS SPECTROMETRY [LARGE SCALE ANALYSIS]</scope>
    <source>
        <tissue>Spleen</tissue>
    </source>
</reference>